<name>UL74A_HCMVM</name>
<protein>
    <recommendedName>
        <fullName>Uncharacterized protein UL74A</fullName>
    </recommendedName>
</protein>
<proteinExistence type="predicted"/>
<keyword id="KW-0472">Membrane</keyword>
<keyword id="KW-1185">Reference proteome</keyword>
<keyword id="KW-0812">Transmembrane</keyword>
<keyword id="KW-1133">Transmembrane helix</keyword>
<keyword id="KW-0261">Viral envelope protein</keyword>
<keyword id="KW-0946">Virion</keyword>
<evidence type="ECO:0000255" key="1"/>
<evidence type="ECO:0000305" key="2"/>
<gene>
    <name type="primary">UL74A</name>
</gene>
<organismHost>
    <name type="scientific">Homo sapiens</name>
    <name type="common">Human</name>
    <dbReference type="NCBI Taxonomy" id="9606"/>
</organismHost>
<reference key="1">
    <citation type="journal article" date="2004" name="J. Gen. Virol.">
        <title>Genetic content of wild-type human cytomegalovirus.</title>
        <authorList>
            <person name="Dolan A."/>
            <person name="Cunningham C."/>
            <person name="Hector R.D."/>
            <person name="Hassan-Walker A.F."/>
            <person name="Lee L."/>
            <person name="Addison C."/>
            <person name="Dargan D.J."/>
            <person name="McGeoch D.J."/>
            <person name="Gatherer D."/>
            <person name="Emery V.C."/>
            <person name="Griffiths P.D."/>
            <person name="Sinzger C."/>
            <person name="McSharry B.P."/>
            <person name="Wilkinson G.W.G."/>
            <person name="Davison A.J."/>
        </authorList>
    </citation>
    <scope>NUCLEOTIDE SEQUENCE [LARGE SCALE GENOMIC DNA]</scope>
</reference>
<sequence length="70" mass="7663">MALTRGGDPAPSVCLVVWFACVYSLLILVVLLLIYRCCIGFQDDLVSRTLAVYRACIQGPICNQTHNSTS</sequence>
<comment type="subcellular location">
    <subcellularLocation>
        <location evidence="2">Virion membrane</location>
        <topology evidence="2">Single-pass membrane protein</topology>
    </subcellularLocation>
</comment>
<organism>
    <name type="scientific">Human cytomegalovirus (strain Merlin)</name>
    <name type="common">HHV-5</name>
    <name type="synonym">Human herpesvirus 5</name>
    <dbReference type="NCBI Taxonomy" id="295027"/>
    <lineage>
        <taxon>Viruses</taxon>
        <taxon>Duplodnaviria</taxon>
        <taxon>Heunggongvirae</taxon>
        <taxon>Peploviricota</taxon>
        <taxon>Herviviricetes</taxon>
        <taxon>Herpesvirales</taxon>
        <taxon>Orthoherpesviridae</taxon>
        <taxon>Betaherpesvirinae</taxon>
        <taxon>Cytomegalovirus</taxon>
        <taxon>Cytomegalovirus humanbeta5</taxon>
        <taxon>Human cytomegalovirus</taxon>
    </lineage>
</organism>
<accession>C1BEG3</accession>
<feature type="chain" id="PRO_0000418306" description="Uncharacterized protein UL74A">
    <location>
        <begin position="1"/>
        <end position="70"/>
    </location>
</feature>
<feature type="transmembrane region" description="Helical" evidence="1">
    <location>
        <begin position="14"/>
        <end position="34"/>
    </location>
</feature>
<dbReference type="EMBL" id="AY446894">
    <property type="protein sequence ID" value="ACO83398.2"/>
    <property type="molecule type" value="Genomic_DNA"/>
</dbReference>
<dbReference type="RefSeq" id="YP_002802310.2">
    <property type="nucleotide sequence ID" value="NC_006273.2"/>
</dbReference>
<dbReference type="SMR" id="C1BEG3"/>
<dbReference type="DNASU" id="7755302"/>
<dbReference type="GeneID" id="7755302"/>
<dbReference type="KEGG" id="vg:7755302"/>
<dbReference type="Proteomes" id="UP000000938">
    <property type="component" value="Segment"/>
</dbReference>
<dbReference type="GO" id="GO:0016020">
    <property type="term" value="C:membrane"/>
    <property type="evidence" value="ECO:0007669"/>
    <property type="project" value="UniProtKB-KW"/>
</dbReference>
<dbReference type="GO" id="GO:0019031">
    <property type="term" value="C:viral envelope"/>
    <property type="evidence" value="ECO:0007669"/>
    <property type="project" value="UniProtKB-KW"/>
</dbReference>
<dbReference type="GO" id="GO:0055036">
    <property type="term" value="C:virion membrane"/>
    <property type="evidence" value="ECO:0007669"/>
    <property type="project" value="UniProtKB-SubCell"/>
</dbReference>